<name>CITD_LACP3</name>
<comment type="function">
    <text evidence="1">Covalent carrier of the coenzyme of citrate lyase.</text>
</comment>
<comment type="subunit">
    <text evidence="1">Oligomer with a subunit composition of (alpha,beta,gamma)6.</text>
</comment>
<comment type="subcellular location">
    <subcellularLocation>
        <location evidence="1">Cytoplasm</location>
    </subcellularLocation>
</comment>
<comment type="similarity">
    <text evidence="1">Belongs to the CitD family.</text>
</comment>
<gene>
    <name evidence="1" type="primary">citD</name>
    <name type="ordered locus">LSEI_1859</name>
</gene>
<keyword id="KW-0963">Cytoplasm</keyword>
<keyword id="KW-0597">Phosphoprotein</keyword>
<keyword id="KW-1185">Reference proteome</keyword>
<proteinExistence type="inferred from homology"/>
<accession>Q037K4</accession>
<dbReference type="EMBL" id="CP000423">
    <property type="protein sequence ID" value="ABJ70618.1"/>
    <property type="molecule type" value="Genomic_DNA"/>
</dbReference>
<dbReference type="RefSeq" id="WP_003566181.1">
    <property type="nucleotide sequence ID" value="NC_008526.1"/>
</dbReference>
<dbReference type="RefSeq" id="YP_807060.1">
    <property type="nucleotide sequence ID" value="NC_008526.1"/>
</dbReference>
<dbReference type="SMR" id="Q037K4"/>
<dbReference type="STRING" id="321967.LSEI_1859"/>
<dbReference type="PaxDb" id="321967-LSEI_1859"/>
<dbReference type="GeneID" id="57090556"/>
<dbReference type="KEGG" id="lca:LSEI_1859"/>
<dbReference type="PATRIC" id="fig|321967.11.peg.1833"/>
<dbReference type="HOGENOM" id="CLU_158489_0_0_9"/>
<dbReference type="Proteomes" id="UP000001651">
    <property type="component" value="Chromosome"/>
</dbReference>
<dbReference type="GO" id="GO:0005737">
    <property type="term" value="C:cytoplasm"/>
    <property type="evidence" value="ECO:0007669"/>
    <property type="project" value="UniProtKB-SubCell"/>
</dbReference>
<dbReference type="HAMAP" id="MF_00805">
    <property type="entry name" value="CitD"/>
    <property type="match status" value="1"/>
</dbReference>
<dbReference type="InterPro" id="IPR006495">
    <property type="entry name" value="CitD"/>
</dbReference>
<dbReference type="InterPro" id="IPR023439">
    <property type="entry name" value="Mal_deCO2ase/Cit_lyase_ACP"/>
</dbReference>
<dbReference type="NCBIfam" id="TIGR01608">
    <property type="entry name" value="citD"/>
    <property type="match status" value="1"/>
</dbReference>
<dbReference type="NCBIfam" id="NF009726">
    <property type="entry name" value="PRK13253.1"/>
    <property type="match status" value="1"/>
</dbReference>
<dbReference type="Pfam" id="PF06857">
    <property type="entry name" value="ACP"/>
    <property type="match status" value="1"/>
</dbReference>
<dbReference type="PIRSF" id="PIRSF002736">
    <property type="entry name" value="Citrt_lyas_gamma"/>
    <property type="match status" value="1"/>
</dbReference>
<feature type="chain" id="PRO_1000047074" description="Citrate lyase acyl carrier protein">
    <location>
        <begin position="1"/>
        <end position="101"/>
    </location>
</feature>
<feature type="modified residue" description="O-(phosphoribosyl dephospho-coenzyme A)serine" evidence="1">
    <location>
        <position position="14"/>
    </location>
</feature>
<sequence>MEIKHPATAGTLESSDIQITLSPATSGVAIQLQSSVEKQFGHQIRSVIEATLAKLGIENVAVDANDKGALDCTIKARTIAAVYRASDNKTFDWEEINAWIN</sequence>
<organism>
    <name type="scientific">Lacticaseibacillus paracasei (strain ATCC 334 / BCRC 17002 / CCUG 31169 / CIP 107868 / KCTC 3260 / NRRL B-441)</name>
    <name type="common">Lactobacillus paracasei</name>
    <dbReference type="NCBI Taxonomy" id="321967"/>
    <lineage>
        <taxon>Bacteria</taxon>
        <taxon>Bacillati</taxon>
        <taxon>Bacillota</taxon>
        <taxon>Bacilli</taxon>
        <taxon>Lactobacillales</taxon>
        <taxon>Lactobacillaceae</taxon>
        <taxon>Lacticaseibacillus</taxon>
    </lineage>
</organism>
<evidence type="ECO:0000255" key="1">
    <source>
        <dbReference type="HAMAP-Rule" id="MF_00805"/>
    </source>
</evidence>
<protein>
    <recommendedName>
        <fullName evidence="1">Citrate lyase acyl carrier protein</fullName>
    </recommendedName>
    <alternativeName>
        <fullName evidence="1">Citrate lyase gamma chain</fullName>
    </alternativeName>
</protein>
<reference key="1">
    <citation type="journal article" date="2006" name="Proc. Natl. Acad. Sci. U.S.A.">
        <title>Comparative genomics of the lactic acid bacteria.</title>
        <authorList>
            <person name="Makarova K.S."/>
            <person name="Slesarev A."/>
            <person name="Wolf Y.I."/>
            <person name="Sorokin A."/>
            <person name="Mirkin B."/>
            <person name="Koonin E.V."/>
            <person name="Pavlov A."/>
            <person name="Pavlova N."/>
            <person name="Karamychev V."/>
            <person name="Polouchine N."/>
            <person name="Shakhova V."/>
            <person name="Grigoriev I."/>
            <person name="Lou Y."/>
            <person name="Rohksar D."/>
            <person name="Lucas S."/>
            <person name="Huang K."/>
            <person name="Goodstein D.M."/>
            <person name="Hawkins T."/>
            <person name="Plengvidhya V."/>
            <person name="Welker D."/>
            <person name="Hughes J."/>
            <person name="Goh Y."/>
            <person name="Benson A."/>
            <person name="Baldwin K."/>
            <person name="Lee J.-H."/>
            <person name="Diaz-Muniz I."/>
            <person name="Dosti B."/>
            <person name="Smeianov V."/>
            <person name="Wechter W."/>
            <person name="Barabote R."/>
            <person name="Lorca G."/>
            <person name="Altermann E."/>
            <person name="Barrangou R."/>
            <person name="Ganesan B."/>
            <person name="Xie Y."/>
            <person name="Rawsthorne H."/>
            <person name="Tamir D."/>
            <person name="Parker C."/>
            <person name="Breidt F."/>
            <person name="Broadbent J.R."/>
            <person name="Hutkins R."/>
            <person name="O'Sullivan D."/>
            <person name="Steele J."/>
            <person name="Unlu G."/>
            <person name="Saier M.H. Jr."/>
            <person name="Klaenhammer T."/>
            <person name="Richardson P."/>
            <person name="Kozyavkin S."/>
            <person name="Weimer B.C."/>
            <person name="Mills D.A."/>
        </authorList>
    </citation>
    <scope>NUCLEOTIDE SEQUENCE [LARGE SCALE GENOMIC DNA]</scope>
    <source>
        <strain>ATCC 334 / BCRC 17002 / CCUG 31169 / CIP 107868 / KCTC 3260 / NRRL B-441</strain>
    </source>
</reference>